<comment type="similarity">
    <text evidence="1">Belongs to the elongation factor P family.</text>
</comment>
<comment type="sequence caution" evidence="2">
    <conflict type="erroneous initiation">
        <sequence resource="EMBL-CDS" id="ACN45648"/>
    </conflict>
</comment>
<reference key="1">
    <citation type="journal article" date="2009" name="PLoS ONE">
        <title>Salmonella paratyphi C: genetic divergence from Salmonella choleraesuis and pathogenic convergence with Salmonella typhi.</title>
        <authorList>
            <person name="Liu W.-Q."/>
            <person name="Feng Y."/>
            <person name="Wang Y."/>
            <person name="Zou Q.-H."/>
            <person name="Chen F."/>
            <person name="Guo J.-T."/>
            <person name="Peng Y.-H."/>
            <person name="Jin Y."/>
            <person name="Li Y.-G."/>
            <person name="Hu S.-N."/>
            <person name="Johnston R.N."/>
            <person name="Liu G.-R."/>
            <person name="Liu S.-L."/>
        </authorList>
    </citation>
    <scope>NUCLEOTIDE SEQUENCE [LARGE SCALE GENOMIC DNA]</scope>
    <source>
        <strain>RKS4594</strain>
    </source>
</reference>
<dbReference type="EMBL" id="CP000857">
    <property type="protein sequence ID" value="ACN45648.1"/>
    <property type="status" value="ALT_INIT"/>
    <property type="molecule type" value="Genomic_DNA"/>
</dbReference>
<dbReference type="RefSeq" id="WP_001136822.1">
    <property type="nucleotide sequence ID" value="NC_012125.1"/>
</dbReference>
<dbReference type="SMR" id="C0Q0S9"/>
<dbReference type="GeneID" id="66756682"/>
<dbReference type="KEGG" id="sei:SPC_1489"/>
<dbReference type="HOGENOM" id="CLU_074944_2_0_6"/>
<dbReference type="Proteomes" id="UP000001599">
    <property type="component" value="Chromosome"/>
</dbReference>
<dbReference type="GO" id="GO:0005829">
    <property type="term" value="C:cytosol"/>
    <property type="evidence" value="ECO:0007669"/>
    <property type="project" value="UniProtKB-ARBA"/>
</dbReference>
<dbReference type="GO" id="GO:0003746">
    <property type="term" value="F:translation elongation factor activity"/>
    <property type="evidence" value="ECO:0007669"/>
    <property type="project" value="UniProtKB-UniRule"/>
</dbReference>
<dbReference type="GO" id="GO:0043043">
    <property type="term" value="P:peptide biosynthetic process"/>
    <property type="evidence" value="ECO:0007669"/>
    <property type="project" value="InterPro"/>
</dbReference>
<dbReference type="CDD" id="cd04470">
    <property type="entry name" value="S1_EF-P_repeat_1"/>
    <property type="match status" value="1"/>
</dbReference>
<dbReference type="CDD" id="cd05794">
    <property type="entry name" value="S1_EF-P_repeat_2"/>
    <property type="match status" value="1"/>
</dbReference>
<dbReference type="FunFam" id="2.40.50.140:FF:000004">
    <property type="entry name" value="Elongation factor P"/>
    <property type="match status" value="1"/>
</dbReference>
<dbReference type="FunFam" id="2.30.30.30:FF:000011">
    <property type="entry name" value="Elongation factor P-like protein"/>
    <property type="match status" value="1"/>
</dbReference>
<dbReference type="FunFam" id="2.40.50.140:FF:000053">
    <property type="entry name" value="Elongation factor P-like protein"/>
    <property type="match status" value="1"/>
</dbReference>
<dbReference type="Gene3D" id="2.30.30.30">
    <property type="match status" value="1"/>
</dbReference>
<dbReference type="Gene3D" id="2.40.50.140">
    <property type="entry name" value="Nucleic acid-binding proteins"/>
    <property type="match status" value="2"/>
</dbReference>
<dbReference type="HAMAP" id="MF_00646">
    <property type="entry name" value="EFP"/>
    <property type="match status" value="1"/>
</dbReference>
<dbReference type="InterPro" id="IPR015365">
    <property type="entry name" value="Elong-fact-P_C"/>
</dbReference>
<dbReference type="InterPro" id="IPR012340">
    <property type="entry name" value="NA-bd_OB-fold"/>
</dbReference>
<dbReference type="InterPro" id="IPR014722">
    <property type="entry name" value="Rib_uL2_dom2"/>
</dbReference>
<dbReference type="InterPro" id="IPR020599">
    <property type="entry name" value="Transl_elong_fac_P/YeiP"/>
</dbReference>
<dbReference type="InterPro" id="IPR013185">
    <property type="entry name" value="Transl_elong_KOW-like"/>
</dbReference>
<dbReference type="InterPro" id="IPR011897">
    <property type="entry name" value="Transl_elong_p-like_YeiP"/>
</dbReference>
<dbReference type="InterPro" id="IPR001059">
    <property type="entry name" value="Transl_elong_P/YeiP_cen"/>
</dbReference>
<dbReference type="InterPro" id="IPR013852">
    <property type="entry name" value="Transl_elong_P/YeiP_CS"/>
</dbReference>
<dbReference type="InterPro" id="IPR008991">
    <property type="entry name" value="Translation_prot_SH3-like_sf"/>
</dbReference>
<dbReference type="NCBIfam" id="NF001810">
    <property type="entry name" value="PRK00529.1"/>
    <property type="match status" value="1"/>
</dbReference>
<dbReference type="NCBIfam" id="NF003392">
    <property type="entry name" value="PRK04542.1"/>
    <property type="match status" value="1"/>
</dbReference>
<dbReference type="NCBIfam" id="TIGR02178">
    <property type="entry name" value="yeiP"/>
    <property type="match status" value="1"/>
</dbReference>
<dbReference type="PANTHER" id="PTHR30053">
    <property type="entry name" value="ELONGATION FACTOR P"/>
    <property type="match status" value="1"/>
</dbReference>
<dbReference type="PANTHER" id="PTHR30053:SF14">
    <property type="entry name" value="TRANSLATION ELONGATION FACTOR KOW-LIKE DOMAIN-CONTAINING PROTEIN"/>
    <property type="match status" value="1"/>
</dbReference>
<dbReference type="Pfam" id="PF01132">
    <property type="entry name" value="EFP"/>
    <property type="match status" value="1"/>
</dbReference>
<dbReference type="Pfam" id="PF08207">
    <property type="entry name" value="EFP_N"/>
    <property type="match status" value="1"/>
</dbReference>
<dbReference type="Pfam" id="PF09285">
    <property type="entry name" value="Elong-fact-P_C"/>
    <property type="match status" value="1"/>
</dbReference>
<dbReference type="PIRSF" id="PIRSF005901">
    <property type="entry name" value="EF-P"/>
    <property type="match status" value="1"/>
</dbReference>
<dbReference type="SMART" id="SM01185">
    <property type="entry name" value="EFP"/>
    <property type="match status" value="1"/>
</dbReference>
<dbReference type="SMART" id="SM00841">
    <property type="entry name" value="Elong-fact-P_C"/>
    <property type="match status" value="1"/>
</dbReference>
<dbReference type="SUPFAM" id="SSF50249">
    <property type="entry name" value="Nucleic acid-binding proteins"/>
    <property type="match status" value="2"/>
</dbReference>
<dbReference type="SUPFAM" id="SSF50104">
    <property type="entry name" value="Translation proteins SH3-like domain"/>
    <property type="match status" value="1"/>
</dbReference>
<dbReference type="PROSITE" id="PS01275">
    <property type="entry name" value="EFP"/>
    <property type="match status" value="1"/>
</dbReference>
<protein>
    <recommendedName>
        <fullName evidence="1">Elongation factor P-like protein</fullName>
    </recommendedName>
</protein>
<feature type="chain" id="PRO_0000384923" description="Elongation factor P-like protein">
    <location>
        <begin position="1"/>
        <end position="190"/>
    </location>
</feature>
<evidence type="ECO:0000255" key="1">
    <source>
        <dbReference type="HAMAP-Rule" id="MF_00646"/>
    </source>
</evidence>
<evidence type="ECO:0000305" key="2"/>
<name>EFPL_SALPC</name>
<gene>
    <name evidence="1" type="primary">yeiP</name>
    <name type="ordered locus">SPC_1489</name>
</gene>
<sequence>MPRANEIKKGMVLNYNGKLLIVKDIDIQSPTARGAATLYKMRFSDVRTGLKVEERFKGDDIVDTVTLSRRGVDFSYVDGNEYVFMDKEDYTPYTFTKDQIEEELLFMPEGGMPDMQVLTWDGQLLALELPQTVDLEIVETAPGIKGASASARNKPATLSTGLVIQVPEYLSAGEKIRIHIEERRYMGRAD</sequence>
<accession>C0Q0S9</accession>
<proteinExistence type="inferred from homology"/>
<organism>
    <name type="scientific">Salmonella paratyphi C (strain RKS4594)</name>
    <dbReference type="NCBI Taxonomy" id="476213"/>
    <lineage>
        <taxon>Bacteria</taxon>
        <taxon>Pseudomonadati</taxon>
        <taxon>Pseudomonadota</taxon>
        <taxon>Gammaproteobacteria</taxon>
        <taxon>Enterobacterales</taxon>
        <taxon>Enterobacteriaceae</taxon>
        <taxon>Salmonella</taxon>
    </lineage>
</organism>